<gene>
    <name evidence="2" type="primary">htpX</name>
    <name type="ordered locus">STY1975</name>
    <name type="ordered locus">t1034</name>
</gene>
<keyword id="KW-0997">Cell inner membrane</keyword>
<keyword id="KW-1003">Cell membrane</keyword>
<keyword id="KW-0378">Hydrolase</keyword>
<keyword id="KW-0472">Membrane</keyword>
<keyword id="KW-0479">Metal-binding</keyword>
<keyword id="KW-0482">Metalloprotease</keyword>
<keyword id="KW-0645">Protease</keyword>
<keyword id="KW-0812">Transmembrane</keyword>
<keyword id="KW-1133">Transmembrane helix</keyword>
<keyword id="KW-0862">Zinc</keyword>
<name>HTPX_SALTI</name>
<evidence type="ECO:0000255" key="1"/>
<evidence type="ECO:0000255" key="2">
    <source>
        <dbReference type="HAMAP-Rule" id="MF_00188"/>
    </source>
</evidence>
<protein>
    <recommendedName>
        <fullName evidence="2">Protease HtpX</fullName>
        <ecNumber evidence="2">3.4.24.-</ecNumber>
    </recommendedName>
    <alternativeName>
        <fullName evidence="2">Heat shock protein HtpX</fullName>
    </alternativeName>
</protein>
<proteinExistence type="inferred from homology"/>
<accession>P65818</accession>
<accession>Q8XEZ3</accession>
<sequence>MMRIALFLLTNLAVMVVFGLVLSLTGIQSSSVQGLLIMALLFGFGGSFISLLMSKWMALKSVGGEVIEQPRNERERWLMNTVATQARQAGIAMPQVAIYHAPDINAFATGARRDASLVAVSTGLLQNMSPDEAEAVIAHEISHIANGDMVTMTLIQGVVNTFVIFISRIIAQIAAGFLGGNRDEGEGSNGNPLIYFAVATVLELVFGILASIITMWFSRYREFHADAGSAKLVGREKMIAALQRLKTSYEPQEATSMMAFCINGKSKSLSELFMTHPPLDKRIEALRSGEYLK</sequence>
<reference key="1">
    <citation type="journal article" date="2001" name="Nature">
        <title>Complete genome sequence of a multiple drug resistant Salmonella enterica serovar Typhi CT18.</title>
        <authorList>
            <person name="Parkhill J."/>
            <person name="Dougan G."/>
            <person name="James K.D."/>
            <person name="Thomson N.R."/>
            <person name="Pickard D."/>
            <person name="Wain J."/>
            <person name="Churcher C.M."/>
            <person name="Mungall K.L."/>
            <person name="Bentley S.D."/>
            <person name="Holden M.T.G."/>
            <person name="Sebaihia M."/>
            <person name="Baker S."/>
            <person name="Basham D."/>
            <person name="Brooks K."/>
            <person name="Chillingworth T."/>
            <person name="Connerton P."/>
            <person name="Cronin A."/>
            <person name="Davis P."/>
            <person name="Davies R.M."/>
            <person name="Dowd L."/>
            <person name="White N."/>
            <person name="Farrar J."/>
            <person name="Feltwell T."/>
            <person name="Hamlin N."/>
            <person name="Haque A."/>
            <person name="Hien T.T."/>
            <person name="Holroyd S."/>
            <person name="Jagels K."/>
            <person name="Krogh A."/>
            <person name="Larsen T.S."/>
            <person name="Leather S."/>
            <person name="Moule S."/>
            <person name="O'Gaora P."/>
            <person name="Parry C."/>
            <person name="Quail M.A."/>
            <person name="Rutherford K.M."/>
            <person name="Simmonds M."/>
            <person name="Skelton J."/>
            <person name="Stevens K."/>
            <person name="Whitehead S."/>
            <person name="Barrell B.G."/>
        </authorList>
    </citation>
    <scope>NUCLEOTIDE SEQUENCE [LARGE SCALE GENOMIC DNA]</scope>
    <source>
        <strain>CT18</strain>
    </source>
</reference>
<reference key="2">
    <citation type="journal article" date="2003" name="J. Bacteriol.">
        <title>Comparative genomics of Salmonella enterica serovar Typhi strains Ty2 and CT18.</title>
        <authorList>
            <person name="Deng W."/>
            <person name="Liou S.-R."/>
            <person name="Plunkett G. III"/>
            <person name="Mayhew G.F."/>
            <person name="Rose D.J."/>
            <person name="Burland V."/>
            <person name="Kodoyianni V."/>
            <person name="Schwartz D.C."/>
            <person name="Blattner F.R."/>
        </authorList>
    </citation>
    <scope>NUCLEOTIDE SEQUENCE [LARGE SCALE GENOMIC DNA]</scope>
    <source>
        <strain>ATCC 700931 / Ty2</strain>
    </source>
</reference>
<dbReference type="EC" id="3.4.24.-" evidence="2"/>
<dbReference type="EMBL" id="AL513382">
    <property type="protein sequence ID" value="CAD05526.1"/>
    <property type="molecule type" value="Genomic_DNA"/>
</dbReference>
<dbReference type="EMBL" id="AE014613">
    <property type="protein sequence ID" value="AAO68701.1"/>
    <property type="molecule type" value="Genomic_DNA"/>
</dbReference>
<dbReference type="RefSeq" id="NP_456349.1">
    <property type="nucleotide sequence ID" value="NC_003198.1"/>
</dbReference>
<dbReference type="RefSeq" id="WP_000984498.1">
    <property type="nucleotide sequence ID" value="NZ_WSUR01000004.1"/>
</dbReference>
<dbReference type="SMR" id="P65818"/>
<dbReference type="STRING" id="220341.gene:17585891"/>
<dbReference type="MEROPS" id="M48.002"/>
<dbReference type="GeneID" id="66756319"/>
<dbReference type="KEGG" id="stt:t1034"/>
<dbReference type="KEGG" id="sty:STY1975"/>
<dbReference type="PATRIC" id="fig|220341.7.peg.1992"/>
<dbReference type="eggNOG" id="COG0501">
    <property type="taxonomic scope" value="Bacteria"/>
</dbReference>
<dbReference type="HOGENOM" id="CLU_042266_1_0_6"/>
<dbReference type="OMA" id="AVCCTEG"/>
<dbReference type="OrthoDB" id="15218at2"/>
<dbReference type="Proteomes" id="UP000000541">
    <property type="component" value="Chromosome"/>
</dbReference>
<dbReference type="Proteomes" id="UP000002670">
    <property type="component" value="Chromosome"/>
</dbReference>
<dbReference type="GO" id="GO:0005886">
    <property type="term" value="C:plasma membrane"/>
    <property type="evidence" value="ECO:0007669"/>
    <property type="project" value="UniProtKB-SubCell"/>
</dbReference>
<dbReference type="GO" id="GO:0004222">
    <property type="term" value="F:metalloendopeptidase activity"/>
    <property type="evidence" value="ECO:0007669"/>
    <property type="project" value="UniProtKB-UniRule"/>
</dbReference>
<dbReference type="GO" id="GO:0008270">
    <property type="term" value="F:zinc ion binding"/>
    <property type="evidence" value="ECO:0007669"/>
    <property type="project" value="UniProtKB-UniRule"/>
</dbReference>
<dbReference type="GO" id="GO:0006508">
    <property type="term" value="P:proteolysis"/>
    <property type="evidence" value="ECO:0007669"/>
    <property type="project" value="UniProtKB-KW"/>
</dbReference>
<dbReference type="CDD" id="cd07335">
    <property type="entry name" value="M48B_HtpX_like"/>
    <property type="match status" value="1"/>
</dbReference>
<dbReference type="FunFam" id="3.30.2010.10:FF:000001">
    <property type="entry name" value="Protease HtpX"/>
    <property type="match status" value="1"/>
</dbReference>
<dbReference type="Gene3D" id="3.30.2010.10">
    <property type="entry name" value="Metalloproteases ('zincins'), catalytic domain"/>
    <property type="match status" value="1"/>
</dbReference>
<dbReference type="HAMAP" id="MF_00188">
    <property type="entry name" value="Pept_M48_protease_HtpX"/>
    <property type="match status" value="1"/>
</dbReference>
<dbReference type="InterPro" id="IPR050083">
    <property type="entry name" value="HtpX_protease"/>
</dbReference>
<dbReference type="InterPro" id="IPR022919">
    <property type="entry name" value="Pept_M48_protease_HtpX"/>
</dbReference>
<dbReference type="InterPro" id="IPR001915">
    <property type="entry name" value="Peptidase_M48"/>
</dbReference>
<dbReference type="NCBIfam" id="NF003965">
    <property type="entry name" value="PRK05457.1"/>
    <property type="match status" value="1"/>
</dbReference>
<dbReference type="PANTHER" id="PTHR43221">
    <property type="entry name" value="PROTEASE HTPX"/>
    <property type="match status" value="1"/>
</dbReference>
<dbReference type="PANTHER" id="PTHR43221:SF1">
    <property type="entry name" value="PROTEASE HTPX"/>
    <property type="match status" value="1"/>
</dbReference>
<dbReference type="Pfam" id="PF01435">
    <property type="entry name" value="Peptidase_M48"/>
    <property type="match status" value="1"/>
</dbReference>
<feature type="chain" id="PRO_0000138887" description="Protease HtpX">
    <location>
        <begin position="1"/>
        <end position="293"/>
    </location>
</feature>
<feature type="topological domain" description="Cytoplasmic" evidence="1">
    <location>
        <begin position="1"/>
        <end position="3"/>
    </location>
</feature>
<feature type="transmembrane region" description="Helical" evidence="2">
    <location>
        <begin position="4"/>
        <end position="24"/>
    </location>
</feature>
<feature type="topological domain" description="Periplasmic" evidence="1">
    <location>
        <begin position="25"/>
        <end position="33"/>
    </location>
</feature>
<feature type="transmembrane region" description="Helical" evidence="2">
    <location>
        <begin position="34"/>
        <end position="54"/>
    </location>
</feature>
<feature type="topological domain" description="Cytoplasmic" evidence="1">
    <location>
        <begin position="55"/>
        <end position="157"/>
    </location>
</feature>
<feature type="transmembrane region" description="Helical" evidence="2">
    <location>
        <begin position="158"/>
        <end position="178"/>
    </location>
</feature>
<feature type="topological domain" description="Periplasmic" evidence="1">
    <location>
        <begin position="179"/>
        <end position="192"/>
    </location>
</feature>
<feature type="transmembrane region" description="Helical" evidence="2">
    <location>
        <begin position="193"/>
        <end position="213"/>
    </location>
</feature>
<feature type="topological domain" description="Cytoplasmic" evidence="1">
    <location>
        <begin position="214"/>
        <end position="293"/>
    </location>
</feature>
<feature type="active site" evidence="2">
    <location>
        <position position="140"/>
    </location>
</feature>
<feature type="binding site" evidence="2">
    <location>
        <position position="139"/>
    </location>
    <ligand>
        <name>Zn(2+)</name>
        <dbReference type="ChEBI" id="CHEBI:29105"/>
        <note>catalytic</note>
    </ligand>
</feature>
<feature type="binding site" evidence="2">
    <location>
        <position position="143"/>
    </location>
    <ligand>
        <name>Zn(2+)</name>
        <dbReference type="ChEBI" id="CHEBI:29105"/>
        <note>catalytic</note>
    </ligand>
</feature>
<feature type="binding site" evidence="2">
    <location>
        <position position="222"/>
    </location>
    <ligand>
        <name>Zn(2+)</name>
        <dbReference type="ChEBI" id="CHEBI:29105"/>
        <note>catalytic</note>
    </ligand>
</feature>
<comment type="cofactor">
    <cofactor evidence="2">
        <name>Zn(2+)</name>
        <dbReference type="ChEBI" id="CHEBI:29105"/>
    </cofactor>
    <text evidence="2">Binds 1 zinc ion per subunit.</text>
</comment>
<comment type="subcellular location">
    <subcellularLocation>
        <location evidence="2">Cell inner membrane</location>
        <topology evidence="2">Multi-pass membrane protein</topology>
    </subcellularLocation>
</comment>
<comment type="similarity">
    <text evidence="2">Belongs to the peptidase M48B family.</text>
</comment>
<organism>
    <name type="scientific">Salmonella typhi</name>
    <dbReference type="NCBI Taxonomy" id="90370"/>
    <lineage>
        <taxon>Bacteria</taxon>
        <taxon>Pseudomonadati</taxon>
        <taxon>Pseudomonadota</taxon>
        <taxon>Gammaproteobacteria</taxon>
        <taxon>Enterobacterales</taxon>
        <taxon>Enterobacteriaceae</taxon>
        <taxon>Salmonella</taxon>
    </lineage>
</organism>